<keyword id="KW-0002">3D-structure</keyword>
<keyword id="KW-0433">Leucine-rich repeat</keyword>
<keyword id="KW-0507">mRNA processing</keyword>
<keyword id="KW-0508">mRNA splicing</keyword>
<keyword id="KW-0539">Nucleus</keyword>
<keyword id="KW-1185">Reference proteome</keyword>
<keyword id="KW-0677">Repeat</keyword>
<keyword id="KW-0747">Spliceosome</keyword>
<dbReference type="EMBL" id="CU329671">
    <property type="protein sequence ID" value="CAB52744.1"/>
    <property type="molecule type" value="Genomic_DNA"/>
</dbReference>
<dbReference type="EMBL" id="AB027844">
    <property type="protein sequence ID" value="BAA87148.1"/>
    <property type="molecule type" value="Genomic_DNA"/>
</dbReference>
<dbReference type="PIR" id="T39747">
    <property type="entry name" value="T39747"/>
</dbReference>
<dbReference type="RefSeq" id="NP_596725.1">
    <property type="nucleotide sequence ID" value="NM_001022650.2"/>
</dbReference>
<dbReference type="PDB" id="3JB9">
    <property type="method" value="EM"/>
    <property type="resolution" value="3.60 A"/>
    <property type="chains" value="j=1-239"/>
</dbReference>
<dbReference type="PDBsum" id="3JB9"/>
<dbReference type="SMR" id="Q9USX8"/>
<dbReference type="BioGRID" id="276282">
    <property type="interactions" value="87"/>
</dbReference>
<dbReference type="FunCoup" id="Q9USX8">
    <property type="interactions" value="1039"/>
</dbReference>
<dbReference type="IntAct" id="Q9USX8">
    <property type="interactions" value="6"/>
</dbReference>
<dbReference type="STRING" id="284812.Q9USX8"/>
<dbReference type="PaxDb" id="4896-SPBC1861.08c.1"/>
<dbReference type="PomBase" id="SPBC1861.08c">
    <property type="gene designation" value="lea1"/>
</dbReference>
<dbReference type="eggNOG" id="KOG1644">
    <property type="taxonomic scope" value="Eukaryota"/>
</dbReference>
<dbReference type="HOGENOM" id="CLU_061027_1_0_1"/>
<dbReference type="InParanoid" id="Q9USX8"/>
<dbReference type="PhylomeDB" id="Q9USX8"/>
<dbReference type="Reactome" id="R-SPO-72163">
    <property type="pathway name" value="mRNA Splicing - Major Pathway"/>
</dbReference>
<dbReference type="EvolutionaryTrace" id="Q9USX8"/>
<dbReference type="PRO" id="PR:Q9USX8"/>
<dbReference type="Proteomes" id="UP000002485">
    <property type="component" value="Chromosome II"/>
</dbReference>
<dbReference type="GO" id="GO:0005829">
    <property type="term" value="C:cytosol"/>
    <property type="evidence" value="ECO:0007005"/>
    <property type="project" value="PomBase"/>
</dbReference>
<dbReference type="GO" id="GO:0005634">
    <property type="term" value="C:nucleus"/>
    <property type="evidence" value="ECO:0007005"/>
    <property type="project" value="PomBase"/>
</dbReference>
<dbReference type="GO" id="GO:0071014">
    <property type="term" value="C:post-mRNA release spliceosomal complex"/>
    <property type="evidence" value="ECO:0000314"/>
    <property type="project" value="PomBase"/>
</dbReference>
<dbReference type="GO" id="GO:0005681">
    <property type="term" value="C:spliceosomal complex"/>
    <property type="evidence" value="ECO:0000314"/>
    <property type="project" value="PomBase"/>
</dbReference>
<dbReference type="GO" id="GO:0005686">
    <property type="term" value="C:U2 snRNP"/>
    <property type="evidence" value="ECO:0000314"/>
    <property type="project" value="PomBase"/>
</dbReference>
<dbReference type="GO" id="GO:0071004">
    <property type="term" value="C:U2-type prespliceosome"/>
    <property type="evidence" value="ECO:0000266"/>
    <property type="project" value="PomBase"/>
</dbReference>
<dbReference type="GO" id="GO:0030620">
    <property type="term" value="F:U2 snRNA binding"/>
    <property type="evidence" value="ECO:0000318"/>
    <property type="project" value="GO_Central"/>
</dbReference>
<dbReference type="GO" id="GO:0045292">
    <property type="term" value="P:mRNA cis splicing, via spliceosome"/>
    <property type="evidence" value="ECO:0000269"/>
    <property type="project" value="PomBase"/>
</dbReference>
<dbReference type="GO" id="GO:0000398">
    <property type="term" value="P:mRNA splicing, via spliceosome"/>
    <property type="evidence" value="ECO:0000318"/>
    <property type="project" value="GO_Central"/>
</dbReference>
<dbReference type="FunFam" id="3.80.10.10:FF:000026">
    <property type="entry name" value="U2 small nuclear ribonucleoprotein A"/>
    <property type="match status" value="1"/>
</dbReference>
<dbReference type="Gene3D" id="3.80.10.10">
    <property type="entry name" value="Ribonuclease Inhibitor"/>
    <property type="match status" value="1"/>
</dbReference>
<dbReference type="InterPro" id="IPR001611">
    <property type="entry name" value="Leu-rich_rpt"/>
</dbReference>
<dbReference type="InterPro" id="IPR032675">
    <property type="entry name" value="LRR_dom_sf"/>
</dbReference>
<dbReference type="InterPro" id="IPR044640">
    <property type="entry name" value="RU2A"/>
</dbReference>
<dbReference type="PANTHER" id="PTHR10552">
    <property type="entry name" value="U2 SMALL NUCLEAR RIBONUCLEOPROTEIN A"/>
    <property type="match status" value="1"/>
</dbReference>
<dbReference type="PANTHER" id="PTHR10552:SF6">
    <property type="entry name" value="U2 SMALL NUCLEAR RIBONUCLEOPROTEIN A"/>
    <property type="match status" value="1"/>
</dbReference>
<dbReference type="Pfam" id="PF14580">
    <property type="entry name" value="LRR_9"/>
    <property type="match status" value="1"/>
</dbReference>
<dbReference type="SUPFAM" id="SSF52058">
    <property type="entry name" value="L domain-like"/>
    <property type="match status" value="1"/>
</dbReference>
<dbReference type="PROSITE" id="PS51450">
    <property type="entry name" value="LRR"/>
    <property type="match status" value="3"/>
</dbReference>
<protein>
    <recommendedName>
        <fullName>U2 small nuclear ribonucleoprotein A'</fullName>
        <shortName>U2 snRNP A'</shortName>
    </recommendedName>
</protein>
<name>RU2A_SCHPO</name>
<organism>
    <name type="scientific">Schizosaccharomyces pombe (strain 972 / ATCC 24843)</name>
    <name type="common">Fission yeast</name>
    <dbReference type="NCBI Taxonomy" id="284812"/>
    <lineage>
        <taxon>Eukaryota</taxon>
        <taxon>Fungi</taxon>
        <taxon>Dikarya</taxon>
        <taxon>Ascomycota</taxon>
        <taxon>Taphrinomycotina</taxon>
        <taxon>Schizosaccharomycetes</taxon>
        <taxon>Schizosaccharomycetales</taxon>
        <taxon>Schizosaccharomycetaceae</taxon>
        <taxon>Schizosaccharomyces</taxon>
    </lineage>
</organism>
<gene>
    <name type="primary">lea1</name>
    <name type="ORF">SPBC1861.08c</name>
</gene>
<reference key="1">
    <citation type="journal article" date="2002" name="Nature">
        <title>The genome sequence of Schizosaccharomyces pombe.</title>
        <authorList>
            <person name="Wood V."/>
            <person name="Gwilliam R."/>
            <person name="Rajandream M.A."/>
            <person name="Lyne M.H."/>
            <person name="Lyne R."/>
            <person name="Stewart A."/>
            <person name="Sgouros J.G."/>
            <person name="Peat N."/>
            <person name="Hayles J."/>
            <person name="Baker S.G."/>
            <person name="Basham D."/>
            <person name="Bowman S."/>
            <person name="Brooks K."/>
            <person name="Brown D."/>
            <person name="Brown S."/>
            <person name="Chillingworth T."/>
            <person name="Churcher C.M."/>
            <person name="Collins M."/>
            <person name="Connor R."/>
            <person name="Cronin A."/>
            <person name="Davis P."/>
            <person name="Feltwell T."/>
            <person name="Fraser A."/>
            <person name="Gentles S."/>
            <person name="Goble A."/>
            <person name="Hamlin N."/>
            <person name="Harris D.E."/>
            <person name="Hidalgo J."/>
            <person name="Hodgson G."/>
            <person name="Holroyd S."/>
            <person name="Hornsby T."/>
            <person name="Howarth S."/>
            <person name="Huckle E.J."/>
            <person name="Hunt S."/>
            <person name="Jagels K."/>
            <person name="James K.D."/>
            <person name="Jones L."/>
            <person name="Jones M."/>
            <person name="Leather S."/>
            <person name="McDonald S."/>
            <person name="McLean J."/>
            <person name="Mooney P."/>
            <person name="Moule S."/>
            <person name="Mungall K.L."/>
            <person name="Murphy L.D."/>
            <person name="Niblett D."/>
            <person name="Odell C."/>
            <person name="Oliver K."/>
            <person name="O'Neil S."/>
            <person name="Pearson D."/>
            <person name="Quail M.A."/>
            <person name="Rabbinowitsch E."/>
            <person name="Rutherford K.M."/>
            <person name="Rutter S."/>
            <person name="Saunders D."/>
            <person name="Seeger K."/>
            <person name="Sharp S."/>
            <person name="Skelton J."/>
            <person name="Simmonds M.N."/>
            <person name="Squares R."/>
            <person name="Squares S."/>
            <person name="Stevens K."/>
            <person name="Taylor K."/>
            <person name="Taylor R.G."/>
            <person name="Tivey A."/>
            <person name="Walsh S.V."/>
            <person name="Warren T."/>
            <person name="Whitehead S."/>
            <person name="Woodward J.R."/>
            <person name="Volckaert G."/>
            <person name="Aert R."/>
            <person name="Robben J."/>
            <person name="Grymonprez B."/>
            <person name="Weltjens I."/>
            <person name="Vanstreels E."/>
            <person name="Rieger M."/>
            <person name="Schaefer M."/>
            <person name="Mueller-Auer S."/>
            <person name="Gabel C."/>
            <person name="Fuchs M."/>
            <person name="Duesterhoeft A."/>
            <person name="Fritzc C."/>
            <person name="Holzer E."/>
            <person name="Moestl D."/>
            <person name="Hilbert H."/>
            <person name="Borzym K."/>
            <person name="Langer I."/>
            <person name="Beck A."/>
            <person name="Lehrach H."/>
            <person name="Reinhardt R."/>
            <person name="Pohl T.M."/>
            <person name="Eger P."/>
            <person name="Zimmermann W."/>
            <person name="Wedler H."/>
            <person name="Wambutt R."/>
            <person name="Purnelle B."/>
            <person name="Goffeau A."/>
            <person name="Cadieu E."/>
            <person name="Dreano S."/>
            <person name="Gloux S."/>
            <person name="Lelaure V."/>
            <person name="Mottier S."/>
            <person name="Galibert F."/>
            <person name="Aves S.J."/>
            <person name="Xiang Z."/>
            <person name="Hunt C."/>
            <person name="Moore K."/>
            <person name="Hurst S.M."/>
            <person name="Lucas M."/>
            <person name="Rochet M."/>
            <person name="Gaillardin C."/>
            <person name="Tallada V.A."/>
            <person name="Garzon A."/>
            <person name="Thode G."/>
            <person name="Daga R.R."/>
            <person name="Cruzado L."/>
            <person name="Jimenez J."/>
            <person name="Sanchez M."/>
            <person name="del Rey F."/>
            <person name="Benito J."/>
            <person name="Dominguez A."/>
            <person name="Revuelta J.L."/>
            <person name="Moreno S."/>
            <person name="Armstrong J."/>
            <person name="Forsburg S.L."/>
            <person name="Cerutti L."/>
            <person name="Lowe T."/>
            <person name="McCombie W.R."/>
            <person name="Paulsen I."/>
            <person name="Potashkin J."/>
            <person name="Shpakovski G.V."/>
            <person name="Ussery D."/>
            <person name="Barrell B.G."/>
            <person name="Nurse P."/>
        </authorList>
    </citation>
    <scope>NUCLEOTIDE SEQUENCE [LARGE SCALE GENOMIC DNA]</scope>
    <source>
        <strain>972 / ATCC 24843</strain>
    </source>
</reference>
<reference key="2">
    <citation type="journal article" date="2000" name="Genes Cells">
        <title>Large-scale screening of intracellular protein localization in living fission yeast cells by the use of a GFP-fusion genomic DNA library.</title>
        <authorList>
            <person name="Ding D.-Q."/>
            <person name="Tomita Y."/>
            <person name="Yamamoto A."/>
            <person name="Chikashige Y."/>
            <person name="Haraguchi T."/>
            <person name="Hiraoka Y."/>
        </authorList>
    </citation>
    <scope>NUCLEOTIDE SEQUENCE [LARGE SCALE GENOMIC DNA] OF 63-212</scope>
    <scope>SUBCELLULAR LOCATION</scope>
    <source>
        <strain>ATCC 38364 / 968</strain>
    </source>
</reference>
<reference key="3">
    <citation type="journal article" date="2002" name="Mol. Cell. Biol.">
        <title>Proteomics analysis reveals stable multiprotein complexes in both fission and budding yeasts containing Myb-related Cdc5p/Cef1p, novel pre-mRNA splicing factors, and snRNAs.</title>
        <authorList>
            <person name="Ohi M.D."/>
            <person name="Link A.J."/>
            <person name="Ren L."/>
            <person name="Jennings J.L."/>
            <person name="McDonald W.H."/>
            <person name="Gould K.L."/>
        </authorList>
    </citation>
    <scope>IDENTIFICATION IN THE CWF COMPLEX</scope>
    <scope>IDENTIFICATION BY MASS SPECTROMETRY</scope>
</reference>
<proteinExistence type="evidence at protein level"/>
<feature type="chain" id="PRO_0000074186" description="U2 small nuclear ribonucleoprotein A'">
    <location>
        <begin position="1"/>
        <end position="239"/>
    </location>
</feature>
<feature type="repeat" description="LRR 1">
    <location>
        <begin position="19"/>
        <end position="40"/>
    </location>
</feature>
<feature type="repeat" description="LRR 2">
    <location>
        <begin position="42"/>
        <end position="63"/>
    </location>
</feature>
<feature type="repeat" description="LRR 3">
    <location>
        <begin position="64"/>
        <end position="85"/>
    </location>
</feature>
<feature type="repeat" description="LRR 4">
    <location>
        <begin position="88"/>
        <end position="109"/>
    </location>
</feature>
<feature type="domain" description="LRRCT">
    <location>
        <begin position="122"/>
        <end position="160"/>
    </location>
</feature>
<evidence type="ECO:0000250" key="1"/>
<evidence type="ECO:0000269" key="2">
    <source>
    </source>
</evidence>
<evidence type="ECO:0000269" key="3">
    <source>
    </source>
</evidence>
<evidence type="ECO:0000305" key="4"/>
<comment type="function">
    <text evidence="1">Involved in pre-mRNA splicing. This protein is associated with sn-RNP U2. It helps the A' protein to bind stem loop IV of U2 snRNA (By similarity).</text>
</comment>
<comment type="subunit">
    <text evidence="3">Belongs to the 40S cdc5-associated complex (or cwf complex), a spliceosome sub-complex reminiscent of a late-stage spliceosome composed of the U2, U5 and U6 snRNAs and at least brr2, cdc5, cwf2/prp3, cwf3/syf1, cwf4/syf3, cwf5/ecm2, spp42/cwf6, cwf7/spf27, cwf8, cwf9, cwf10, cwf11, cwf12, prp45/cwf13, cwf14, cwf15, cwf16, cwf17, cwf18, cwf19, cwf20, cwf21, cwf22, cwf23, cwf24, cwf25, cwf26, cyp7/cwf27, cwf28, cwf29/ist3, lea1, msl1, prp5/cwf1, prp10, prp12/sap130, prp17, prp22, sap61, sap62, sap114, sap145, slu7, smb1, smd1, smd3, smf1, smg1 and syf2.</text>
</comment>
<comment type="subcellular location">
    <subcellularLocation>
        <location evidence="2">Nucleus</location>
    </subcellularLocation>
</comment>
<comment type="similarity">
    <text evidence="4">Belongs to the U2 small nuclear ribonucleoprotein A family.</text>
</comment>
<accession>Q9USX8</accession>
<accession>Q9UU32</accession>
<sequence>MRLNAEFLSQVPSFISPLKETELDLRWYQIPIIENLGVLRDVHDAIDFTDNDIRYLGNFPRMKRLQTLLCGNNRITAIAPDIGKVLPNLKTLSLAQNHLQEIADLDPLASCPQLTNLSCIDNPVAQKQYYRLYLIWRIPSLHILDFERVRRNERLRAEEVFGQIQNPTEIASSIMGVKSRVFDLAALVQSHPEANSPITTGYTLTPEEREKIKEAIKNASSIAEINRLEAMLLEGKIPK</sequence>